<dbReference type="EMBL" id="AE017244">
    <property type="protein sequence ID" value="AAZ53760.1"/>
    <property type="molecule type" value="Genomic_DNA"/>
</dbReference>
<dbReference type="RefSeq" id="WP_011206239.1">
    <property type="nucleotide sequence ID" value="NC_007332.1"/>
</dbReference>
<dbReference type="SMR" id="Q4A7X9"/>
<dbReference type="KEGG" id="mhp:MHP7448_0391"/>
<dbReference type="HOGENOM" id="CLU_107907_0_2_14"/>
<dbReference type="Proteomes" id="UP000000553">
    <property type="component" value="Chromosome"/>
</dbReference>
<dbReference type="GO" id="GO:0005737">
    <property type="term" value="C:cytoplasm"/>
    <property type="evidence" value="ECO:0007669"/>
    <property type="project" value="UniProtKB-UniRule"/>
</dbReference>
<dbReference type="GO" id="GO:0009295">
    <property type="term" value="C:nucleoid"/>
    <property type="evidence" value="ECO:0007669"/>
    <property type="project" value="UniProtKB-SubCell"/>
</dbReference>
<dbReference type="GO" id="GO:0003700">
    <property type="term" value="F:DNA-binding transcription factor activity"/>
    <property type="evidence" value="ECO:0007669"/>
    <property type="project" value="UniProtKB-UniRule"/>
</dbReference>
<dbReference type="GO" id="GO:0000976">
    <property type="term" value="F:transcription cis-regulatory region binding"/>
    <property type="evidence" value="ECO:0007669"/>
    <property type="project" value="TreeGrafter"/>
</dbReference>
<dbReference type="GO" id="GO:2000143">
    <property type="term" value="P:negative regulation of DNA-templated transcription initiation"/>
    <property type="evidence" value="ECO:0007669"/>
    <property type="project" value="TreeGrafter"/>
</dbReference>
<dbReference type="CDD" id="cd16321">
    <property type="entry name" value="MraZ_C"/>
    <property type="match status" value="1"/>
</dbReference>
<dbReference type="CDD" id="cd16320">
    <property type="entry name" value="MraZ_N"/>
    <property type="match status" value="1"/>
</dbReference>
<dbReference type="Gene3D" id="3.40.1550.20">
    <property type="entry name" value="Transcriptional regulator MraZ domain"/>
    <property type="match status" value="1"/>
</dbReference>
<dbReference type="HAMAP" id="MF_01008">
    <property type="entry name" value="MraZ"/>
    <property type="match status" value="1"/>
</dbReference>
<dbReference type="InterPro" id="IPR003444">
    <property type="entry name" value="MraZ"/>
</dbReference>
<dbReference type="InterPro" id="IPR035644">
    <property type="entry name" value="MraZ_C"/>
</dbReference>
<dbReference type="InterPro" id="IPR020603">
    <property type="entry name" value="MraZ_dom"/>
</dbReference>
<dbReference type="InterPro" id="IPR035642">
    <property type="entry name" value="MraZ_N"/>
</dbReference>
<dbReference type="InterPro" id="IPR038619">
    <property type="entry name" value="MraZ_sf"/>
</dbReference>
<dbReference type="InterPro" id="IPR007159">
    <property type="entry name" value="SpoVT-AbrB_dom"/>
</dbReference>
<dbReference type="InterPro" id="IPR037914">
    <property type="entry name" value="SpoVT-AbrB_sf"/>
</dbReference>
<dbReference type="PANTHER" id="PTHR34701">
    <property type="entry name" value="TRANSCRIPTIONAL REGULATOR MRAZ"/>
    <property type="match status" value="1"/>
</dbReference>
<dbReference type="PANTHER" id="PTHR34701:SF1">
    <property type="entry name" value="TRANSCRIPTIONAL REGULATOR MRAZ"/>
    <property type="match status" value="1"/>
</dbReference>
<dbReference type="Pfam" id="PF02381">
    <property type="entry name" value="MraZ"/>
    <property type="match status" value="2"/>
</dbReference>
<dbReference type="SUPFAM" id="SSF89447">
    <property type="entry name" value="AbrB/MazE/MraZ-like"/>
    <property type="match status" value="1"/>
</dbReference>
<dbReference type="PROSITE" id="PS51740">
    <property type="entry name" value="SPOVT_ABRB"/>
    <property type="match status" value="2"/>
</dbReference>
<feature type="chain" id="PRO_0000230091" description="Transcriptional regulator MraZ">
    <location>
        <begin position="1"/>
        <end position="146"/>
    </location>
</feature>
<feature type="domain" description="SpoVT-AbrB 1" evidence="2">
    <location>
        <begin position="4"/>
        <end position="46"/>
    </location>
</feature>
<feature type="domain" description="SpoVT-AbrB 2" evidence="2">
    <location>
        <begin position="75"/>
        <end position="118"/>
    </location>
</feature>
<protein>
    <recommendedName>
        <fullName>Transcriptional regulator MraZ</fullName>
    </recommendedName>
</protein>
<gene>
    <name evidence="1" type="primary">mraZ</name>
    <name type="ordered locus">MHP7448_0391</name>
</gene>
<reference key="1">
    <citation type="journal article" date="2005" name="J. Bacteriol.">
        <title>Swine and poultry pathogens: the complete genome sequences of two strains of Mycoplasma hyopneumoniae and a strain of Mycoplasma synoviae.</title>
        <authorList>
            <person name="Vasconcelos A.T.R."/>
            <person name="Ferreira H.B."/>
            <person name="Bizarro C.V."/>
            <person name="Bonatto S.L."/>
            <person name="Carvalho M.O."/>
            <person name="Pinto P.M."/>
            <person name="Almeida D.F."/>
            <person name="Almeida L.G.P."/>
            <person name="Almeida R."/>
            <person name="Alves-Junior L."/>
            <person name="Assuncao E.N."/>
            <person name="Azevedo V.A.C."/>
            <person name="Bogo M.R."/>
            <person name="Brigido M.M."/>
            <person name="Brocchi M."/>
            <person name="Burity H.A."/>
            <person name="Camargo A.A."/>
            <person name="Camargo S.S."/>
            <person name="Carepo M.S."/>
            <person name="Carraro D.M."/>
            <person name="de Mattos Cascardo J.C."/>
            <person name="Castro L.A."/>
            <person name="Cavalcanti G."/>
            <person name="Chemale G."/>
            <person name="Collevatti R.G."/>
            <person name="Cunha C.W."/>
            <person name="Dallagiovanna B."/>
            <person name="Dambros B.P."/>
            <person name="Dellagostin O.A."/>
            <person name="Falcao C."/>
            <person name="Fantinatti-Garboggini F."/>
            <person name="Felipe M.S.S."/>
            <person name="Fiorentin L."/>
            <person name="Franco G.R."/>
            <person name="Freitas N.S.A."/>
            <person name="Frias D."/>
            <person name="Grangeiro T.B."/>
            <person name="Grisard E.C."/>
            <person name="Guimaraes C.T."/>
            <person name="Hungria M."/>
            <person name="Jardim S.N."/>
            <person name="Krieger M.A."/>
            <person name="Laurino J.P."/>
            <person name="Lima L.F.A."/>
            <person name="Lopes M.I."/>
            <person name="Loreto E.L.S."/>
            <person name="Madeira H.M.F."/>
            <person name="Manfio G.P."/>
            <person name="Maranhao A.Q."/>
            <person name="Martinkovics C.T."/>
            <person name="Medeiros S.R.B."/>
            <person name="Moreira M.A.M."/>
            <person name="Neiva M."/>
            <person name="Ramalho-Neto C.E."/>
            <person name="Nicolas M.F."/>
            <person name="Oliveira S.C."/>
            <person name="Paixao R.F.C."/>
            <person name="Pedrosa F.O."/>
            <person name="Pena S.D.J."/>
            <person name="Pereira M."/>
            <person name="Pereira-Ferrari L."/>
            <person name="Piffer I."/>
            <person name="Pinto L.S."/>
            <person name="Potrich D.P."/>
            <person name="Salim A.C.M."/>
            <person name="Santos F.R."/>
            <person name="Schmitt R."/>
            <person name="Schneider M.P.C."/>
            <person name="Schrank A."/>
            <person name="Schrank I.S."/>
            <person name="Schuck A.F."/>
            <person name="Seuanez H.N."/>
            <person name="Silva D.W."/>
            <person name="Silva R."/>
            <person name="Silva S.C."/>
            <person name="Soares C.M.A."/>
            <person name="Souza K.R.L."/>
            <person name="Souza R.C."/>
            <person name="Staats C.C."/>
            <person name="Steffens M.B.R."/>
            <person name="Teixeira S.M.R."/>
            <person name="Urmenyi T.P."/>
            <person name="Vainstein M.H."/>
            <person name="Zuccherato L.W."/>
            <person name="Simpson A.J.G."/>
            <person name="Zaha A."/>
        </authorList>
    </citation>
    <scope>NUCLEOTIDE SEQUENCE [LARGE SCALE GENOMIC DNA]</scope>
    <source>
        <strain>7448</strain>
    </source>
</reference>
<proteinExistence type="inferred from homology"/>
<sequence length="146" mass="16934">MFGTVFRILDEKNRIVMPPAFRNELEGDFYISANLEKILEIRSQTEFDLLAQKIGKANSLDPKLRDFARYFFGNTVKVSADKQGRFLIPKNLLDLATISKNLYLIGVNNKIEIWPEQRYEQFYAKFSDSEMTADLEKELLKSGVEL</sequence>
<evidence type="ECO:0000255" key="1">
    <source>
        <dbReference type="HAMAP-Rule" id="MF_01008"/>
    </source>
</evidence>
<evidence type="ECO:0000255" key="2">
    <source>
        <dbReference type="PROSITE-ProRule" id="PRU01076"/>
    </source>
</evidence>
<name>MRAZ_MESH7</name>
<keyword id="KW-0963">Cytoplasm</keyword>
<keyword id="KW-0238">DNA-binding</keyword>
<keyword id="KW-0677">Repeat</keyword>
<keyword id="KW-0804">Transcription</keyword>
<keyword id="KW-0805">Transcription regulation</keyword>
<comment type="subunit">
    <text evidence="1">Forms oligomers.</text>
</comment>
<comment type="subcellular location">
    <subcellularLocation>
        <location evidence="1">Cytoplasm</location>
        <location evidence="1">Nucleoid</location>
    </subcellularLocation>
</comment>
<comment type="similarity">
    <text evidence="1">Belongs to the MraZ family.</text>
</comment>
<organism>
    <name type="scientific">Mesomycoplasma hyopneumoniae (strain 7448)</name>
    <name type="common">Mycoplasma hyopneumoniae</name>
    <dbReference type="NCBI Taxonomy" id="262722"/>
    <lineage>
        <taxon>Bacteria</taxon>
        <taxon>Bacillati</taxon>
        <taxon>Mycoplasmatota</taxon>
        <taxon>Mycoplasmoidales</taxon>
        <taxon>Metamycoplasmataceae</taxon>
        <taxon>Mesomycoplasma</taxon>
    </lineage>
</organism>
<accession>Q4A7X9</accession>